<proteinExistence type="evidence at protein level"/>
<comment type="function">
    <text evidence="5">Type I collagen is a member of group I collagen (fibrillar forming collagen).</text>
</comment>
<comment type="subunit">
    <text evidence="1">Trimers of one alpha 2(I) and two alpha 1(I) chains. Interacts (via C-terminus) with TMEM131 (via PapD-L domain); the interaction is direct and is involved in assembly and TRAPPIII ER-to-Golgi transport complex-dependent secretion of collagen.</text>
</comment>
<comment type="subcellular location">
    <subcellularLocation>
        <location>Secreted</location>
    </subcellularLocation>
    <subcellularLocation>
        <location>Secreted</location>
        <location>Extracellular space</location>
    </subcellularLocation>
    <subcellularLocation>
        <location evidence="5">Secreted</location>
        <location evidence="5">Extracellular space</location>
        <location evidence="5">Extracellular matrix</location>
    </subcellularLocation>
</comment>
<comment type="tissue specificity">
    <text evidence="5">Forms the fibrils of tendon, ligaments and bones. In bones, the fibrils are mineralized with calcium hydroxyapatite.</text>
</comment>
<comment type="PTM">
    <text evidence="5">Prolines at the third position of the tripeptide repeating unit (G-X-Y) are hydroxylated in some or all of the chains.</text>
</comment>
<comment type="miscellaneous">
    <text evidence="6">These protein fragments were extracted from fossils. The tryptic peptides required multiple purification steps in order to eliminate contaminants and to increase the concentration of peptidic material.</text>
</comment>
<comment type="similarity">
    <text evidence="5">Belongs to the fibrillar collagen family.</text>
</comment>
<organism evidence="4">
    <name type="scientific">Macrauchenia sp</name>
    <dbReference type="NCBI Taxonomy" id="1563127"/>
    <lineage>
        <taxon>Eukaryota</taxon>
        <taxon>Metazoa</taxon>
        <taxon>Chordata</taxon>
        <taxon>Craniata</taxon>
        <taxon>Vertebrata</taxon>
        <taxon>Euteleostomi</taxon>
        <taxon>Mammalia</taxon>
        <taxon>Eutheria</taxon>
        <taxon>Litopterna</taxon>
        <taxon>Macraucheniidae</taxon>
        <taxon>Macrauchenia</taxon>
    </lineage>
</organism>
<sequence>GPMGIMGPRRGPPGPPGKAGEDGHPGKPGRERGVVGPQGARGFPGTPGIPGFKGIRGHNGIDGIKGQPGAPGVKGEPGAPGENGTPGQAGARGIPGERGRVGAPGPAGARGSDGSVGPVGPAGPIGSAGPPGFPGAPGPKGEIGPVGNPGPAGPAGPRGEVGIPGVSGPVGPPGNPGANGIPGAKGAAGIPGVAGAPGIPGPRGIPGPVGAAGATGARGIVGEPGPAGTKGESGNKGEPGSAGPQGPPGPSGEEGKRGPNGEAGSAGPTGPPGIRGSRGIPGADGRAGVMGPPGSRGASGPAGVRGPNGDSGRPGEPGIMGPRGFPGSPGNVGPAGKEGPAGIPGIDGRPGPAGPAGARGEPGNIGFPGPKGPTGDPGKGPPGFQGIPGPAGTAGEAGKPGERGIPGEFGIPGPAGARGERGPPGESGAAGPAGPIGSRGPSGPPGPDGAKGEPGVVGAPGTAGPSGPSGIPGERGAAGIPGPKGEKGETGIRGAPGAVGAPGPAGANGDRGEAGPAGPAGPAGPRGSPGERGEVGPAGPNGFAGPAGAAGQPGAKGERKGPKGENGPVGPTGPVGSAGPAGPNGPPGPAGSRGDGGPPGATGFPGAAGRTGPPGPAGITGPPGPPGAAGKEGIRGDQGPVGRAGETGASGPPGFAGEKGPNGEAGTAGAPGIPGPQGIIGAPGIIGIPGSRGERGIPGVAGSVGEPGPIGIAGPPGARGPPGAVGSPGVNGAPGEAGRDGNPGNDGPPGRGYPGNSGPVGAAGAPGSPGPVGPTGKHGNRGEPGPVGSVGPAGAVGPRGPSGPQGIRGDKGEPGDKGPRGIPGIKGHNGIQGIPGIAGQHGDQGAPGSVGPAGPRGPAGPTGPAGKDGRIGHPGSVGPAGIRGSQGSQGPAGPPGPPGPPGPPGPS</sequence>
<gene>
    <name evidence="1" type="primary">COL1A2</name>
</gene>
<name>CO1A2_MACSX</name>
<keyword id="KW-0106">Calcium</keyword>
<keyword id="KW-0176">Collagen</keyword>
<keyword id="KW-0903">Direct protein sequencing</keyword>
<keyword id="KW-0952">Extinct organism protein</keyword>
<keyword id="KW-0272">Extracellular matrix</keyword>
<keyword id="KW-0379">Hydroxylation</keyword>
<keyword id="KW-0677">Repeat</keyword>
<keyword id="KW-0964">Secreted</keyword>
<feature type="chain" id="PRO_0000433503" description="Collagen alpha-2(I) chain" evidence="3">
    <location>
        <begin position="1"/>
        <end position="907"/>
    </location>
</feature>
<feature type="region of interest" description="Disordered" evidence="2">
    <location>
        <begin position="1"/>
        <end position="183"/>
    </location>
</feature>
<feature type="region of interest" description="Disordered" evidence="2">
    <location>
        <begin position="199"/>
        <end position="907"/>
    </location>
</feature>
<feature type="compositionally biased region" description="Basic and acidic residues" evidence="2">
    <location>
        <begin position="19"/>
        <end position="33"/>
    </location>
</feature>
<feature type="compositionally biased region" description="Low complexity" evidence="2">
    <location>
        <begin position="101"/>
        <end position="130"/>
    </location>
</feature>
<feature type="compositionally biased region" description="Low complexity" evidence="2">
    <location>
        <begin position="155"/>
        <end position="169"/>
    </location>
</feature>
<feature type="compositionally biased region" description="Low complexity" evidence="2">
    <location>
        <begin position="206"/>
        <end position="221"/>
    </location>
</feature>
<feature type="compositionally biased region" description="Low complexity" evidence="2">
    <location>
        <begin position="272"/>
        <end position="281"/>
    </location>
</feature>
<feature type="compositionally biased region" description="Low complexity" evidence="2">
    <location>
        <begin position="292"/>
        <end position="307"/>
    </location>
</feature>
<feature type="compositionally biased region" description="Low complexity" evidence="2">
    <location>
        <begin position="340"/>
        <end position="362"/>
    </location>
</feature>
<feature type="compositionally biased region" description="Low complexity" evidence="2">
    <location>
        <begin position="424"/>
        <end position="441"/>
    </location>
</feature>
<feature type="compositionally biased region" description="Low complexity" evidence="2">
    <location>
        <begin position="453"/>
        <end position="475"/>
    </location>
</feature>
<feature type="compositionally biased region" description="Low complexity" evidence="2">
    <location>
        <begin position="495"/>
        <end position="507"/>
    </location>
</feature>
<feature type="compositionally biased region" description="Low complexity" evidence="2">
    <location>
        <begin position="535"/>
        <end position="555"/>
    </location>
</feature>
<feature type="compositionally biased region" description="Low complexity" evidence="2">
    <location>
        <begin position="566"/>
        <end position="581"/>
    </location>
</feature>
<feature type="compositionally biased region" description="Gly residues" evidence="2">
    <location>
        <begin position="591"/>
        <end position="600"/>
    </location>
</feature>
<feature type="compositionally biased region" description="Low complexity" evidence="2">
    <location>
        <begin position="601"/>
        <end position="611"/>
    </location>
</feature>
<feature type="compositionally biased region" description="Low complexity" evidence="2">
    <location>
        <begin position="664"/>
        <end position="691"/>
    </location>
</feature>
<feature type="compositionally biased region" description="Low complexity" evidence="2">
    <location>
        <begin position="706"/>
        <end position="745"/>
    </location>
</feature>
<feature type="compositionally biased region" description="Low complexity" evidence="2">
    <location>
        <begin position="756"/>
        <end position="766"/>
    </location>
</feature>
<feature type="compositionally biased region" description="Low complexity" evidence="2">
    <location>
        <begin position="783"/>
        <end position="804"/>
    </location>
</feature>
<feature type="compositionally biased region" description="Basic and acidic residues" evidence="2">
    <location>
        <begin position="808"/>
        <end position="819"/>
    </location>
</feature>
<feature type="compositionally biased region" description="Pro residues" evidence="2">
    <location>
        <begin position="892"/>
        <end position="907"/>
    </location>
</feature>
<feature type="modified residue" description="Deamidated asparagine" evidence="3">
    <location>
        <position position="260"/>
    </location>
</feature>
<feature type="modified residue" description="4-hydroxyproline" evidence="3">
    <location>
        <position position="272"/>
    </location>
</feature>
<feature type="unsure residue" description="I or L" evidence="3">
    <location>
        <position position="5"/>
    </location>
</feature>
<feature type="unsure residue" description="I or L" evidence="3">
    <location>
        <position position="49"/>
    </location>
</feature>
<feature type="unsure residue" description="I or L" evidence="3">
    <location>
        <position position="55"/>
    </location>
</feature>
<feature type="unsure residue" description="I or L" evidence="3">
    <location>
        <position position="61"/>
    </location>
</feature>
<feature type="unsure residue" description="I or L" evidence="3">
    <location>
        <position position="64"/>
    </location>
</feature>
<feature type="unsure residue" description="I or L" evidence="3">
    <location>
        <position position="94"/>
    </location>
</feature>
<feature type="unsure residue" description="I or L" evidence="3">
    <location>
        <position position="125"/>
    </location>
</feature>
<feature type="unsure residue" description="I or L" evidence="3">
    <location>
        <position position="143"/>
    </location>
</feature>
<feature type="unsure residue" description="I or L" evidence="3">
    <location>
        <position position="163"/>
    </location>
</feature>
<feature type="unsure residue" description="I or L" evidence="3">
    <location>
        <position position="181"/>
    </location>
</feature>
<feature type="unsure residue" description="I or L" evidence="3">
    <location>
        <position position="190"/>
    </location>
</feature>
<feature type="unsure residue" description="I or L" evidence="3">
    <location>
        <position position="199"/>
    </location>
</feature>
<feature type="unsure residue" description="I or L" evidence="3">
    <location>
        <position position="205"/>
    </location>
</feature>
<feature type="unsure residue" description="I or L" evidence="3">
    <location>
        <position position="220"/>
    </location>
</feature>
<feature type="unsure residue" description="I or L" evidence="3">
    <location>
        <position position="274"/>
    </location>
</feature>
<feature type="unsure residue" description="I or L" evidence="3">
    <location>
        <position position="280"/>
    </location>
</feature>
<feature type="unsure residue" description="I or L" evidence="3">
    <location>
        <position position="319"/>
    </location>
</feature>
<feature type="unsure residue" description="I or L" evidence="3">
    <location>
        <position position="343"/>
    </location>
</feature>
<feature type="unsure residue" description="I or L" evidence="3">
    <location>
        <position position="346"/>
    </location>
</feature>
<feature type="unsure residue" description="I or L" evidence="3">
    <location>
        <position position="365"/>
    </location>
</feature>
<feature type="unsure residue" description="I or L" evidence="3">
    <location>
        <position position="387"/>
    </location>
</feature>
<feature type="unsure residue" description="I or L" evidence="3">
    <location>
        <position position="405"/>
    </location>
</feature>
<feature type="unsure residue" description="I or L" evidence="3">
    <location>
        <position position="411"/>
    </location>
</feature>
<feature type="unsure residue" description="I or L" evidence="3">
    <location>
        <position position="436"/>
    </location>
</feature>
<feature type="unsure residue" description="I or L" evidence="3">
    <location>
        <position position="471"/>
    </location>
</feature>
<feature type="unsure residue" description="I or L" evidence="3">
    <location>
        <position position="480"/>
    </location>
</feature>
<feature type="unsure residue" description="I or L" evidence="3">
    <location>
        <position position="492"/>
    </location>
</feature>
<feature type="unsure residue" description="I or L" evidence="3">
    <location>
        <position position="619"/>
    </location>
</feature>
<feature type="unsure residue" description="I or L" evidence="3">
    <location>
        <position position="634"/>
    </location>
</feature>
<feature type="unsure residue" description="I or L" evidence="3">
    <location>
        <position position="673"/>
    </location>
</feature>
<feature type="unsure residue" description="I or L" evidence="3">
    <location>
        <position position="679"/>
    </location>
</feature>
<feature type="unsure residue" description="I or L" evidence="3">
    <location>
        <position position="680"/>
    </location>
</feature>
<feature type="unsure residue" description="I or L" evidence="3">
    <location>
        <position position="685"/>
    </location>
</feature>
<feature type="unsure residue" description="I or L" evidence="3">
    <location>
        <position position="686"/>
    </location>
</feature>
<feature type="unsure residue" description="I or L" evidence="3">
    <location>
        <position position="688"/>
    </location>
</feature>
<feature type="unsure residue" description="I or L" evidence="3">
    <location>
        <position position="697"/>
    </location>
</feature>
<feature type="unsure residue" description="I or L" evidence="3">
    <location>
        <position position="710"/>
    </location>
</feature>
<feature type="unsure residue" description="I or L" evidence="3">
    <location>
        <position position="712"/>
    </location>
</feature>
<feature type="unsure residue" description="I or L" evidence="3">
    <location>
        <position position="807"/>
    </location>
</feature>
<feature type="unsure residue" description="I or L" evidence="3">
    <location>
        <position position="822"/>
    </location>
</feature>
<feature type="unsure residue" description="I or L" evidence="3">
    <location>
        <position position="825"/>
    </location>
</feature>
<feature type="unsure residue" description="I or L" evidence="3">
    <location>
        <position position="831"/>
    </location>
</feature>
<feature type="unsure residue" description="I or L" evidence="3">
    <location>
        <position position="834"/>
    </location>
</feature>
<feature type="unsure residue" description="I or L" evidence="3">
    <location>
        <position position="837"/>
    </location>
</feature>
<feature type="unsure residue" description="I or L" evidence="3">
    <location>
        <position position="871"/>
    </location>
</feature>
<feature type="unsure residue" description="I or L" evidence="3">
    <location>
        <position position="882"/>
    </location>
</feature>
<feature type="non-consecutive residues" evidence="4">
    <location>
        <begin position="9"/>
        <end position="10"/>
    </location>
</feature>
<feature type="non-consecutive residues" evidence="4">
    <location>
        <begin position="30"/>
        <end position="31"/>
    </location>
</feature>
<feature type="non-consecutive residues" evidence="4">
    <location>
        <begin position="276"/>
        <end position="277"/>
    </location>
</feature>
<feature type="non-consecutive residues" evidence="4">
    <location>
        <begin position="379"/>
        <end position="380"/>
    </location>
</feature>
<feature type="non-consecutive residues" evidence="4">
    <location>
        <begin position="493"/>
        <end position="494"/>
    </location>
</feature>
<feature type="non-consecutive residues" evidence="4">
    <location>
        <begin position="559"/>
        <end position="560"/>
    </location>
</feature>
<feature type="non-consecutive residues" evidence="4">
    <location>
        <begin position="635"/>
        <end position="636"/>
    </location>
</feature>
<feature type="non-consecutive residues" evidence="4">
    <location>
        <begin position="751"/>
        <end position="752"/>
    </location>
</feature>
<accession>C0HJP6</accession>
<protein>
    <recommendedName>
        <fullName evidence="4">Collagen alpha-2(I) chain</fullName>
    </recommendedName>
    <alternativeName>
        <fullName evidence="1">Alpha-2 type I collagen</fullName>
    </alternativeName>
</protein>
<evidence type="ECO:0000250" key="1">
    <source>
        <dbReference type="UniProtKB" id="P08123"/>
    </source>
</evidence>
<evidence type="ECO:0000256" key="2">
    <source>
        <dbReference type="SAM" id="MobiDB-lite"/>
    </source>
</evidence>
<evidence type="ECO:0000269" key="3">
    <source>
    </source>
</evidence>
<evidence type="ECO:0000303" key="4">
    <source>
    </source>
</evidence>
<evidence type="ECO:0000305" key="5"/>
<evidence type="ECO:0000305" key="6">
    <source>
    </source>
</evidence>
<reference evidence="5" key="1">
    <citation type="journal article" date="2015" name="Nature">
        <title>Ancient proteins resolve the evolutionary history of Darwin's South American ungulates.</title>
        <authorList>
            <person name="Welker F."/>
            <person name="Collins M.J."/>
            <person name="Thomas J.A."/>
            <person name="Wadsley M."/>
            <person name="Brace S."/>
            <person name="Cappellini E."/>
            <person name="Turvey S.T."/>
            <person name="Reguero M."/>
            <person name="Gelfo J.N."/>
            <person name="Kramarz A."/>
            <person name="Burger J."/>
            <person name="Thomas-Oates J."/>
            <person name="Ashford D.A."/>
            <person name="Ashton P.D."/>
            <person name="Rowsell K."/>
            <person name="Porter D.M."/>
            <person name="Kessler B."/>
            <person name="Fischer R."/>
            <person name="Baessmann C."/>
            <person name="Kaspar S."/>
            <person name="Olsen J.V."/>
            <person name="Kiley P."/>
            <person name="Elliott J.A."/>
            <person name="Kelstrup C.D."/>
            <person name="Mullin V."/>
            <person name="Hofreiter M."/>
            <person name="Willerslev E."/>
            <person name="Hublin J.J."/>
            <person name="Orlando L."/>
            <person name="Barnes I."/>
            <person name="MacPhee R.D."/>
        </authorList>
    </citation>
    <scope>PROTEIN SEQUENCE</scope>
    <scope>HYDROXYLATION AT PRO-272</scope>
    <scope>DEAMIDATION AT ASN-260</scope>
    <scope>IDENTIFICATION BY MASS SPECTROMETRY</scope>
    <source>
        <tissue evidence="4">Bone</tissue>
    </source>
</reference>
<dbReference type="GO" id="GO:0005581">
    <property type="term" value="C:collagen trimer"/>
    <property type="evidence" value="ECO:0007669"/>
    <property type="project" value="UniProtKB-KW"/>
</dbReference>
<dbReference type="GO" id="GO:0005576">
    <property type="term" value="C:extracellular region"/>
    <property type="evidence" value="ECO:0007669"/>
    <property type="project" value="UniProtKB-SubCell"/>
</dbReference>
<dbReference type="InterPro" id="IPR008160">
    <property type="entry name" value="Collagen"/>
</dbReference>
<dbReference type="InterPro" id="IPR050938">
    <property type="entry name" value="Collagen_Structural_Proteins"/>
</dbReference>
<dbReference type="PANTHER" id="PTHR37456:SF6">
    <property type="entry name" value="COLLAGEN ALPHA-1(XXIII) CHAIN-LIKE ISOFORM X2"/>
    <property type="match status" value="1"/>
</dbReference>
<dbReference type="PANTHER" id="PTHR37456">
    <property type="entry name" value="SI:CH211-266K2.1"/>
    <property type="match status" value="1"/>
</dbReference>
<dbReference type="Pfam" id="PF01391">
    <property type="entry name" value="Collagen"/>
    <property type="match status" value="8"/>
</dbReference>